<sequence>MKKLLILLTFVSFVFSKTFYYDVYVFFFRVGEIKIQIDKEKSYAEGKTLESMKWLYSYDFRFYEEKGDMKLYEREKEKVRVFGKDKIYEKKPWIPLLVDYLKTGKVKENNLFKVKKEGNKFIVIPLKSKRVKKIILKDGKVPKEIVIHGKVKIKLKLRKAEDDKGTV</sequence>
<organism>
    <name type="scientific">Aquifex aeolicus (strain VF5)</name>
    <dbReference type="NCBI Taxonomy" id="224324"/>
    <lineage>
        <taxon>Bacteria</taxon>
        <taxon>Pseudomonadati</taxon>
        <taxon>Aquificota</taxon>
        <taxon>Aquificia</taxon>
        <taxon>Aquificales</taxon>
        <taxon>Aquificaceae</taxon>
        <taxon>Aquifex</taxon>
    </lineage>
</organism>
<protein>
    <recommendedName>
        <fullName>Uncharacterized protein aq_1581</fullName>
    </recommendedName>
</protein>
<keyword id="KW-0472">Membrane</keyword>
<keyword id="KW-1185">Reference proteome</keyword>
<keyword id="KW-0812">Transmembrane</keyword>
<keyword id="KW-1133">Transmembrane helix</keyword>
<feature type="chain" id="PRO_0000186937" description="Uncharacterized protein aq_1581">
    <location>
        <begin position="1"/>
        <end position="167"/>
    </location>
</feature>
<feature type="transmembrane region" description="Helical" evidence="1">
    <location>
        <begin position="5"/>
        <end position="27"/>
    </location>
</feature>
<comment type="subcellular location">
    <subcellularLocation>
        <location evidence="2">Membrane</location>
        <topology evidence="2">Single-pass membrane protein</topology>
    </subcellularLocation>
</comment>
<name>Y1581_AQUAE</name>
<evidence type="ECO:0000255" key="1"/>
<evidence type="ECO:0000305" key="2"/>
<gene>
    <name type="ordered locus">aq_1581</name>
</gene>
<proteinExistence type="predicted"/>
<accession>O67521</accession>
<reference key="1">
    <citation type="journal article" date="1998" name="Nature">
        <title>The complete genome of the hyperthermophilic bacterium Aquifex aeolicus.</title>
        <authorList>
            <person name="Deckert G."/>
            <person name="Warren P.V."/>
            <person name="Gaasterland T."/>
            <person name="Young W.G."/>
            <person name="Lenox A.L."/>
            <person name="Graham D.E."/>
            <person name="Overbeek R."/>
            <person name="Snead M.A."/>
            <person name="Keller M."/>
            <person name="Aujay M."/>
            <person name="Huber R."/>
            <person name="Feldman R.A."/>
            <person name="Short J.M."/>
            <person name="Olsen G.J."/>
            <person name="Swanson R.V."/>
        </authorList>
    </citation>
    <scope>NUCLEOTIDE SEQUENCE [LARGE SCALE GENOMIC DNA]</scope>
    <source>
        <strain>VF5</strain>
    </source>
</reference>
<dbReference type="EMBL" id="AE000657">
    <property type="protein sequence ID" value="AAC07489.1"/>
    <property type="molecule type" value="Genomic_DNA"/>
</dbReference>
<dbReference type="PIR" id="G70436">
    <property type="entry name" value="G70436"/>
</dbReference>
<dbReference type="RefSeq" id="NP_214086.1">
    <property type="nucleotide sequence ID" value="NC_000918.1"/>
</dbReference>
<dbReference type="RefSeq" id="WP_010881024.1">
    <property type="nucleotide sequence ID" value="NC_000918.1"/>
</dbReference>
<dbReference type="STRING" id="224324.aq_1581"/>
<dbReference type="EnsemblBacteria" id="AAC07489">
    <property type="protein sequence ID" value="AAC07489"/>
    <property type="gene ID" value="aq_1581"/>
</dbReference>
<dbReference type="KEGG" id="aae:aq_1581"/>
<dbReference type="eggNOG" id="ENOG50347UN">
    <property type="taxonomic scope" value="Bacteria"/>
</dbReference>
<dbReference type="HOGENOM" id="CLU_1591205_0_0_0"/>
<dbReference type="InParanoid" id="O67521"/>
<dbReference type="OrthoDB" id="13122at2"/>
<dbReference type="Proteomes" id="UP000000798">
    <property type="component" value="Chromosome"/>
</dbReference>
<dbReference type="GO" id="GO:0016020">
    <property type="term" value="C:membrane"/>
    <property type="evidence" value="ECO:0007669"/>
    <property type="project" value="UniProtKB-SubCell"/>
</dbReference>